<accession>P67801</accession>
<accession>P41537</accession>
<keyword id="KW-0027">Amidation</keyword>
<keyword id="KW-0903">Direct protein sequencing</keyword>
<keyword id="KW-0372">Hormone</keyword>
<keyword id="KW-0964">Secreted</keyword>
<protein>
    <recommendedName>
        <fullName>Diuretic hormone</fullName>
        <shortName>DH</shortName>
    </recommendedName>
    <alternativeName>
        <fullName evidence="2">Diuretic peptide</fullName>
        <shortName evidence="2">DP</shortName>
    </alternativeName>
</protein>
<feature type="chain" id="PRO_0000221021" description="Diuretic hormone" evidence="1">
    <location>
        <begin position="1"/>
        <end position="44"/>
    </location>
</feature>
<feature type="modified residue" description="Valine amide" evidence="1">
    <location>
        <position position="44"/>
    </location>
</feature>
<evidence type="ECO:0000269" key="1">
    <source>
    </source>
</evidence>
<evidence type="ECO:0000303" key="2">
    <source>
    </source>
</evidence>
<evidence type="ECO:0000305" key="3"/>
<proteinExistence type="evidence at protein level"/>
<reference key="1">
    <citation type="journal article" date="1994" name="Peptides">
        <title>Isolation and characterization of a diuretic peptide common to the house fly and stable fly.</title>
        <authorList>
            <person name="Clottens F.L."/>
            <person name="Holman G.M."/>
            <person name="Coast G.M."/>
            <person name="Totty N.F."/>
            <person name="Hayes T.K."/>
            <person name="Kay I."/>
            <person name="Mallet A.I."/>
            <person name="Wright M.S."/>
            <person name="Chung J.-S."/>
            <person name="Truong O."/>
            <person name="Bull D.L."/>
        </authorList>
    </citation>
    <scope>PROTEIN SEQUENCE</scope>
    <scope>FUNCTION</scope>
    <scope>MASS SPECTROMETRY</scope>
    <scope>AMIDATION AT VAL-44</scope>
</reference>
<organism>
    <name type="scientific">Stomoxys calcitrans</name>
    <name type="common">Stable fly</name>
    <name type="synonym">Conops calcitrans</name>
    <dbReference type="NCBI Taxonomy" id="35570"/>
    <lineage>
        <taxon>Eukaryota</taxon>
        <taxon>Metazoa</taxon>
        <taxon>Ecdysozoa</taxon>
        <taxon>Arthropoda</taxon>
        <taxon>Hexapoda</taxon>
        <taxon>Insecta</taxon>
        <taxon>Pterygota</taxon>
        <taxon>Neoptera</taxon>
        <taxon>Endopterygota</taxon>
        <taxon>Diptera</taxon>
        <taxon>Brachycera</taxon>
        <taxon>Muscomorpha</taxon>
        <taxon>Muscoidea</taxon>
        <taxon>Muscidae</taxon>
        <taxon>Stomoxys</taxon>
    </lineage>
</organism>
<sequence length="44" mass="5181">NKPSLSIVNPLDVLRQRLLLEIARRQMKENTRQVELNRAILKNV</sequence>
<dbReference type="SMR" id="P67801"/>
<dbReference type="Proteomes" id="UP000095300">
    <property type="component" value="Unassembled WGS sequence"/>
</dbReference>
<dbReference type="GO" id="GO:0005576">
    <property type="term" value="C:extracellular region"/>
    <property type="evidence" value="ECO:0007669"/>
    <property type="project" value="UniProtKB-SubCell"/>
</dbReference>
<dbReference type="GO" id="GO:0005179">
    <property type="term" value="F:hormone activity"/>
    <property type="evidence" value="ECO:0007669"/>
    <property type="project" value="UniProtKB-KW"/>
</dbReference>
<dbReference type="InterPro" id="IPR018446">
    <property type="entry name" value="Corticotropin-releasing_fac_CS"/>
</dbReference>
<dbReference type="InterPro" id="IPR000187">
    <property type="entry name" value="CRF"/>
</dbReference>
<dbReference type="Pfam" id="PF00473">
    <property type="entry name" value="CRF"/>
    <property type="match status" value="1"/>
</dbReference>
<dbReference type="SMART" id="SM00039">
    <property type="entry name" value="CRF"/>
    <property type="match status" value="1"/>
</dbReference>
<dbReference type="PROSITE" id="PS00511">
    <property type="entry name" value="CRF"/>
    <property type="match status" value="1"/>
</dbReference>
<comment type="function">
    <text evidence="1">Regulation of fluid secretion. Stimulates primary urine secretion by Malpighian tubules and causes a dose-dependent stimulation of cAMP levels in the tubules. May act as clearance peptide in that it may remove metabolic waste from the hemolymph.</text>
</comment>
<comment type="subcellular location">
    <subcellularLocation>
        <location>Secreted</location>
    </subcellularLocation>
</comment>
<comment type="mass spectrometry" mass="5179.93" error="0.39" method="Electrospray" evidence="1"/>
<comment type="similarity">
    <text evidence="3">Belongs to the sauvagine/corticotropin-releasing factor/urotensin I family.</text>
</comment>
<name>DIUH_STOCA</name>